<evidence type="ECO:0000255" key="1">
    <source>
        <dbReference type="HAMAP-Rule" id="MF_00016"/>
    </source>
</evidence>
<protein>
    <recommendedName>
        <fullName evidence="1">Holliday junction branch migration complex subunit RuvB</fullName>
        <ecNumber evidence="1">3.6.4.-</ecNumber>
    </recommendedName>
</protein>
<accession>Q9A1Y1</accession>
<accession>Q491R4</accession>
<organism>
    <name type="scientific">Streptococcus pyogenes serotype M1</name>
    <dbReference type="NCBI Taxonomy" id="301447"/>
    <lineage>
        <taxon>Bacteria</taxon>
        <taxon>Bacillati</taxon>
        <taxon>Bacillota</taxon>
        <taxon>Bacilli</taxon>
        <taxon>Lactobacillales</taxon>
        <taxon>Streptococcaceae</taxon>
        <taxon>Streptococcus</taxon>
    </lineage>
</organism>
<feature type="chain" id="PRO_0000165609" description="Holliday junction branch migration complex subunit RuvB">
    <location>
        <begin position="1"/>
        <end position="332"/>
    </location>
</feature>
<feature type="region of interest" description="Large ATPase domain (RuvB-L)" evidence="1">
    <location>
        <begin position="1"/>
        <end position="181"/>
    </location>
</feature>
<feature type="region of interest" description="Small ATPAse domain (RuvB-S)" evidence="1">
    <location>
        <begin position="182"/>
        <end position="252"/>
    </location>
</feature>
<feature type="region of interest" description="Head domain (RuvB-H)" evidence="1">
    <location>
        <begin position="255"/>
        <end position="332"/>
    </location>
</feature>
<feature type="binding site" evidence="1">
    <location>
        <position position="20"/>
    </location>
    <ligand>
        <name>ATP</name>
        <dbReference type="ChEBI" id="CHEBI:30616"/>
    </ligand>
</feature>
<feature type="binding site" evidence="1">
    <location>
        <position position="21"/>
    </location>
    <ligand>
        <name>ATP</name>
        <dbReference type="ChEBI" id="CHEBI:30616"/>
    </ligand>
</feature>
<feature type="binding site" evidence="1">
    <location>
        <position position="62"/>
    </location>
    <ligand>
        <name>ATP</name>
        <dbReference type="ChEBI" id="CHEBI:30616"/>
    </ligand>
</feature>
<feature type="binding site" evidence="1">
    <location>
        <position position="65"/>
    </location>
    <ligand>
        <name>ATP</name>
        <dbReference type="ChEBI" id="CHEBI:30616"/>
    </ligand>
</feature>
<feature type="binding site" evidence="1">
    <location>
        <position position="66"/>
    </location>
    <ligand>
        <name>ATP</name>
        <dbReference type="ChEBI" id="CHEBI:30616"/>
    </ligand>
</feature>
<feature type="binding site" evidence="1">
    <location>
        <position position="66"/>
    </location>
    <ligand>
        <name>Mg(2+)</name>
        <dbReference type="ChEBI" id="CHEBI:18420"/>
    </ligand>
</feature>
<feature type="binding site" evidence="1">
    <location>
        <position position="67"/>
    </location>
    <ligand>
        <name>ATP</name>
        <dbReference type="ChEBI" id="CHEBI:30616"/>
    </ligand>
</feature>
<feature type="binding site" evidence="1">
    <location>
        <begin position="128"/>
        <end position="130"/>
    </location>
    <ligand>
        <name>ATP</name>
        <dbReference type="ChEBI" id="CHEBI:30616"/>
    </ligand>
</feature>
<feature type="binding site" evidence="1">
    <location>
        <position position="171"/>
    </location>
    <ligand>
        <name>ATP</name>
        <dbReference type="ChEBI" id="CHEBI:30616"/>
    </ligand>
</feature>
<feature type="binding site" evidence="1">
    <location>
        <position position="181"/>
    </location>
    <ligand>
        <name>ATP</name>
        <dbReference type="ChEBI" id="CHEBI:30616"/>
    </ligand>
</feature>
<feature type="binding site" evidence="1">
    <location>
        <position position="218"/>
    </location>
    <ligand>
        <name>ATP</name>
        <dbReference type="ChEBI" id="CHEBI:30616"/>
    </ligand>
</feature>
<feature type="binding site" evidence="1">
    <location>
        <position position="291"/>
    </location>
    <ligand>
        <name>DNA</name>
        <dbReference type="ChEBI" id="CHEBI:16991"/>
    </ligand>
</feature>
<feature type="binding site" evidence="1">
    <location>
        <position position="310"/>
    </location>
    <ligand>
        <name>DNA</name>
        <dbReference type="ChEBI" id="CHEBI:16991"/>
    </ligand>
</feature>
<feature type="binding site" evidence="1">
    <location>
        <position position="312"/>
    </location>
    <ligand>
        <name>DNA</name>
        <dbReference type="ChEBI" id="CHEBI:16991"/>
    </ligand>
</feature>
<feature type="binding site" evidence="1">
    <location>
        <position position="315"/>
    </location>
    <ligand>
        <name>DNA</name>
        <dbReference type="ChEBI" id="CHEBI:16991"/>
    </ligand>
</feature>
<sequence>MARILDNNVMGNEEFSDRTLRPQYLHEYIGQDKVKEQFAIFIEAAKRRDESLDHVLLFGPPGLGKTTMAFVIANELGVNLKQTSGPAVEKAGDLVAILNELEPGDILFIDEIHRMPMSVEEVLYSAMEDFYIDIMIGAGDTSRSIHLDLPPFTLIGATTRAGMLSNPLRARFGITGHMEYYQEKDLTEIVERTATIFEIKIDHEAARKLACRSRGTPRIANRLLKRVRDYAQIIGDGIITAQITDRALTMLDVDREGLDYIDQKILRTMIEMYQGGPVGLGTLSVNIAEERNTVEEMYEPYLIQKGFLMRTRTGRVATQKAYRHLGYPYQNT</sequence>
<proteinExistence type="inferred from homology"/>
<keyword id="KW-0067">ATP-binding</keyword>
<keyword id="KW-0963">Cytoplasm</keyword>
<keyword id="KW-0227">DNA damage</keyword>
<keyword id="KW-0233">DNA recombination</keyword>
<keyword id="KW-0234">DNA repair</keyword>
<keyword id="KW-0238">DNA-binding</keyword>
<keyword id="KW-0378">Hydrolase</keyword>
<keyword id="KW-0547">Nucleotide-binding</keyword>
<keyword id="KW-1185">Reference proteome</keyword>
<name>RUVB_STRP1</name>
<dbReference type="EC" id="3.6.4.-" evidence="1"/>
<dbReference type="EMBL" id="AE004092">
    <property type="protein sequence ID" value="AAK33175.1"/>
    <property type="molecule type" value="Genomic_DNA"/>
</dbReference>
<dbReference type="EMBL" id="CP000017">
    <property type="protein sequence ID" value="AAZ50654.1"/>
    <property type="molecule type" value="Genomic_DNA"/>
</dbReference>
<dbReference type="RefSeq" id="NP_268453.1">
    <property type="nucleotide sequence ID" value="NC_002737.2"/>
</dbReference>
<dbReference type="SMR" id="Q9A1Y1"/>
<dbReference type="PaxDb" id="1314-HKU360_00068"/>
<dbReference type="KEGG" id="spy:SPy_0038"/>
<dbReference type="KEGG" id="spz:M5005_Spy0035"/>
<dbReference type="PATRIC" id="fig|160490.10.peg.36"/>
<dbReference type="HOGENOM" id="CLU_055599_1_0_9"/>
<dbReference type="OMA" id="IHRMSRP"/>
<dbReference type="Proteomes" id="UP000000750">
    <property type="component" value="Chromosome"/>
</dbReference>
<dbReference type="GO" id="GO:0005737">
    <property type="term" value="C:cytoplasm"/>
    <property type="evidence" value="ECO:0007669"/>
    <property type="project" value="UniProtKB-SubCell"/>
</dbReference>
<dbReference type="GO" id="GO:0048476">
    <property type="term" value="C:Holliday junction resolvase complex"/>
    <property type="evidence" value="ECO:0007669"/>
    <property type="project" value="UniProtKB-UniRule"/>
</dbReference>
<dbReference type="GO" id="GO:0005524">
    <property type="term" value="F:ATP binding"/>
    <property type="evidence" value="ECO:0007669"/>
    <property type="project" value="UniProtKB-UniRule"/>
</dbReference>
<dbReference type="GO" id="GO:0016887">
    <property type="term" value="F:ATP hydrolysis activity"/>
    <property type="evidence" value="ECO:0007669"/>
    <property type="project" value="InterPro"/>
</dbReference>
<dbReference type="GO" id="GO:0000400">
    <property type="term" value="F:four-way junction DNA binding"/>
    <property type="evidence" value="ECO:0007669"/>
    <property type="project" value="UniProtKB-UniRule"/>
</dbReference>
<dbReference type="GO" id="GO:0009378">
    <property type="term" value="F:four-way junction helicase activity"/>
    <property type="evidence" value="ECO:0007669"/>
    <property type="project" value="InterPro"/>
</dbReference>
<dbReference type="GO" id="GO:0006310">
    <property type="term" value="P:DNA recombination"/>
    <property type="evidence" value="ECO:0007669"/>
    <property type="project" value="UniProtKB-UniRule"/>
</dbReference>
<dbReference type="GO" id="GO:0006281">
    <property type="term" value="P:DNA repair"/>
    <property type="evidence" value="ECO:0007669"/>
    <property type="project" value="UniProtKB-UniRule"/>
</dbReference>
<dbReference type="CDD" id="cd00009">
    <property type="entry name" value="AAA"/>
    <property type="match status" value="1"/>
</dbReference>
<dbReference type="Gene3D" id="1.10.8.60">
    <property type="match status" value="1"/>
</dbReference>
<dbReference type="Gene3D" id="3.40.50.300">
    <property type="entry name" value="P-loop containing nucleotide triphosphate hydrolases"/>
    <property type="match status" value="1"/>
</dbReference>
<dbReference type="Gene3D" id="1.10.10.10">
    <property type="entry name" value="Winged helix-like DNA-binding domain superfamily/Winged helix DNA-binding domain"/>
    <property type="match status" value="1"/>
</dbReference>
<dbReference type="HAMAP" id="MF_00016">
    <property type="entry name" value="DNA_HJ_migration_RuvB"/>
    <property type="match status" value="1"/>
</dbReference>
<dbReference type="InterPro" id="IPR003593">
    <property type="entry name" value="AAA+_ATPase"/>
</dbReference>
<dbReference type="InterPro" id="IPR041445">
    <property type="entry name" value="AAA_lid_4"/>
</dbReference>
<dbReference type="InterPro" id="IPR004605">
    <property type="entry name" value="DNA_helicase_Holl-junc_RuvB"/>
</dbReference>
<dbReference type="InterPro" id="IPR027417">
    <property type="entry name" value="P-loop_NTPase"/>
</dbReference>
<dbReference type="InterPro" id="IPR008824">
    <property type="entry name" value="RuvB-like_N"/>
</dbReference>
<dbReference type="InterPro" id="IPR008823">
    <property type="entry name" value="RuvB_C"/>
</dbReference>
<dbReference type="InterPro" id="IPR036388">
    <property type="entry name" value="WH-like_DNA-bd_sf"/>
</dbReference>
<dbReference type="InterPro" id="IPR036390">
    <property type="entry name" value="WH_DNA-bd_sf"/>
</dbReference>
<dbReference type="NCBIfam" id="NF000868">
    <property type="entry name" value="PRK00080.1"/>
    <property type="match status" value="1"/>
</dbReference>
<dbReference type="NCBIfam" id="TIGR00635">
    <property type="entry name" value="ruvB"/>
    <property type="match status" value="1"/>
</dbReference>
<dbReference type="PANTHER" id="PTHR42848">
    <property type="match status" value="1"/>
</dbReference>
<dbReference type="PANTHER" id="PTHR42848:SF1">
    <property type="entry name" value="HOLLIDAY JUNCTION BRANCH MIGRATION COMPLEX SUBUNIT RUVB"/>
    <property type="match status" value="1"/>
</dbReference>
<dbReference type="Pfam" id="PF17864">
    <property type="entry name" value="AAA_lid_4"/>
    <property type="match status" value="1"/>
</dbReference>
<dbReference type="Pfam" id="PF05491">
    <property type="entry name" value="RuvB_C"/>
    <property type="match status" value="1"/>
</dbReference>
<dbReference type="Pfam" id="PF05496">
    <property type="entry name" value="RuvB_N"/>
    <property type="match status" value="1"/>
</dbReference>
<dbReference type="SMART" id="SM00382">
    <property type="entry name" value="AAA"/>
    <property type="match status" value="1"/>
</dbReference>
<dbReference type="SUPFAM" id="SSF52540">
    <property type="entry name" value="P-loop containing nucleoside triphosphate hydrolases"/>
    <property type="match status" value="1"/>
</dbReference>
<dbReference type="SUPFAM" id="SSF46785">
    <property type="entry name" value="Winged helix' DNA-binding domain"/>
    <property type="match status" value="1"/>
</dbReference>
<comment type="function">
    <text evidence="1">The RuvA-RuvB-RuvC complex processes Holliday junction (HJ) DNA during genetic recombination and DNA repair, while the RuvA-RuvB complex plays an important role in the rescue of blocked DNA replication forks via replication fork reversal (RFR). RuvA specifically binds to HJ cruciform DNA, conferring on it an open structure. The RuvB hexamer acts as an ATP-dependent pump, pulling dsDNA into and through the RuvAB complex. RuvB forms 2 homohexamers on either side of HJ DNA bound by 1 or 2 RuvA tetramers; 4 subunits per hexamer contact DNA at a time. Coordinated motions by a converter formed by DNA-disengaged RuvB subunits stimulates ATP hydrolysis and nucleotide exchange. Immobilization of the converter enables RuvB to convert the ATP-contained energy into a lever motion, pulling 2 nucleotides of DNA out of the RuvA tetramer per ATP hydrolyzed, thus driving DNA branch migration. The RuvB motors rotate together with the DNA substrate, which together with the progressing nucleotide cycle form the mechanistic basis for DNA recombination by continuous HJ branch migration. Branch migration allows RuvC to scan DNA until it finds its consensus sequence, where it cleaves and resolves cruciform DNA.</text>
</comment>
<comment type="catalytic activity">
    <reaction evidence="1">
        <text>ATP + H2O = ADP + phosphate + H(+)</text>
        <dbReference type="Rhea" id="RHEA:13065"/>
        <dbReference type="ChEBI" id="CHEBI:15377"/>
        <dbReference type="ChEBI" id="CHEBI:15378"/>
        <dbReference type="ChEBI" id="CHEBI:30616"/>
        <dbReference type="ChEBI" id="CHEBI:43474"/>
        <dbReference type="ChEBI" id="CHEBI:456216"/>
    </reaction>
</comment>
<comment type="subunit">
    <text evidence="1">Homohexamer. Forms an RuvA(8)-RuvB(12)-Holliday junction (HJ) complex. HJ DNA is sandwiched between 2 RuvA tetramers; dsDNA enters through RuvA and exits via RuvB. An RuvB hexamer assembles on each DNA strand where it exits the tetramer. Each RuvB hexamer is contacted by two RuvA subunits (via domain III) on 2 adjacent RuvB subunits; this complex drives branch migration. In the full resolvosome a probable DNA-RuvA(4)-RuvB(12)-RuvC(2) complex forms which resolves the HJ.</text>
</comment>
<comment type="subcellular location">
    <subcellularLocation>
        <location evidence="1">Cytoplasm</location>
    </subcellularLocation>
</comment>
<comment type="domain">
    <text evidence="1">Has 3 domains, the large (RuvB-L) and small ATPase (RuvB-S) domains and the C-terminal head (RuvB-H) domain. The head domain binds DNA, while the ATPase domains jointly bind ATP, ADP or are empty depending on the state of the subunit in the translocation cycle. During a single DNA translocation step the structure of each domain remains the same, but their relative positions change.</text>
</comment>
<comment type="similarity">
    <text evidence="1">Belongs to the RuvB family.</text>
</comment>
<gene>
    <name evidence="1" type="primary">ruvB</name>
    <name type="ordered locus">SPy_0038</name>
    <name type="ordered locus">M5005_Spy0035</name>
</gene>
<reference key="1">
    <citation type="journal article" date="2001" name="Proc. Natl. Acad. Sci. U.S.A.">
        <title>Complete genome sequence of an M1 strain of Streptococcus pyogenes.</title>
        <authorList>
            <person name="Ferretti J.J."/>
            <person name="McShan W.M."/>
            <person name="Ajdic D.J."/>
            <person name="Savic D.J."/>
            <person name="Savic G."/>
            <person name="Lyon K."/>
            <person name="Primeaux C."/>
            <person name="Sezate S."/>
            <person name="Suvorov A.N."/>
            <person name="Kenton S."/>
            <person name="Lai H.S."/>
            <person name="Lin S.P."/>
            <person name="Qian Y."/>
            <person name="Jia H.G."/>
            <person name="Najar F.Z."/>
            <person name="Ren Q."/>
            <person name="Zhu H."/>
            <person name="Song L."/>
            <person name="White J."/>
            <person name="Yuan X."/>
            <person name="Clifton S.W."/>
            <person name="Roe B.A."/>
            <person name="McLaughlin R.E."/>
        </authorList>
    </citation>
    <scope>NUCLEOTIDE SEQUENCE [LARGE SCALE GENOMIC DNA]</scope>
    <source>
        <strain>ATCC 700294 / SF370 / Serotype M1</strain>
    </source>
</reference>
<reference key="2">
    <citation type="journal article" date="2005" name="J. Infect. Dis.">
        <title>Evolutionary origin and emergence of a highly successful clone of serotype M1 group A Streptococcus involved multiple horizontal gene transfer events.</title>
        <authorList>
            <person name="Sumby P."/>
            <person name="Porcella S.F."/>
            <person name="Madrigal A.G."/>
            <person name="Barbian K.D."/>
            <person name="Virtaneva K."/>
            <person name="Ricklefs S.M."/>
            <person name="Sturdevant D.E."/>
            <person name="Graham M.R."/>
            <person name="Vuopio-Varkila J."/>
            <person name="Hoe N.P."/>
            <person name="Musser J.M."/>
        </authorList>
    </citation>
    <scope>NUCLEOTIDE SEQUENCE [LARGE SCALE GENOMIC DNA]</scope>
    <source>
        <strain>ATCC BAA-947 / MGAS5005 / Serotype M1</strain>
    </source>
</reference>